<evidence type="ECO:0000255" key="1">
    <source>
        <dbReference type="HAMAP-Rule" id="MF_01006"/>
    </source>
</evidence>
<name>UPPP_STRR6</name>
<feature type="chain" id="PRO_0000151215" description="Undecaprenyl-diphosphatase">
    <location>
        <begin position="1"/>
        <end position="281"/>
    </location>
</feature>
<feature type="transmembrane region" description="Helical" evidence="1">
    <location>
        <begin position="4"/>
        <end position="24"/>
    </location>
</feature>
<feature type="transmembrane region" description="Helical" evidence="1">
    <location>
        <begin position="45"/>
        <end position="65"/>
    </location>
</feature>
<feature type="transmembrane region" description="Helical" evidence="1">
    <location>
        <begin position="89"/>
        <end position="109"/>
    </location>
</feature>
<feature type="transmembrane region" description="Helical" evidence="1">
    <location>
        <begin position="113"/>
        <end position="133"/>
    </location>
</feature>
<feature type="transmembrane region" description="Helical" evidence="1">
    <location>
        <begin position="152"/>
        <end position="172"/>
    </location>
</feature>
<feature type="transmembrane region" description="Helical" evidence="1">
    <location>
        <begin position="190"/>
        <end position="210"/>
    </location>
</feature>
<feature type="transmembrane region" description="Helical" evidence="1">
    <location>
        <begin position="225"/>
        <end position="245"/>
    </location>
</feature>
<feature type="transmembrane region" description="Helical" evidence="1">
    <location>
        <begin position="257"/>
        <end position="277"/>
    </location>
</feature>
<organism>
    <name type="scientific">Streptococcus pneumoniae (strain ATCC BAA-255 / R6)</name>
    <dbReference type="NCBI Taxonomy" id="171101"/>
    <lineage>
        <taxon>Bacteria</taxon>
        <taxon>Bacillati</taxon>
        <taxon>Bacillota</taxon>
        <taxon>Bacilli</taxon>
        <taxon>Lactobacillales</taxon>
        <taxon>Streptococcaceae</taxon>
        <taxon>Streptococcus</taxon>
    </lineage>
</organism>
<reference key="1">
    <citation type="journal article" date="2001" name="J. Bacteriol.">
        <title>Genome of the bacterium Streptococcus pneumoniae strain R6.</title>
        <authorList>
            <person name="Hoskins J."/>
            <person name="Alborn W.E. Jr."/>
            <person name="Arnold J."/>
            <person name="Blaszczak L.C."/>
            <person name="Burgett S."/>
            <person name="DeHoff B.S."/>
            <person name="Estrem S.T."/>
            <person name="Fritz L."/>
            <person name="Fu D.-J."/>
            <person name="Fuller W."/>
            <person name="Geringer C."/>
            <person name="Gilmour R."/>
            <person name="Glass J.S."/>
            <person name="Khoja H."/>
            <person name="Kraft A.R."/>
            <person name="Lagace R.E."/>
            <person name="LeBlanc D.J."/>
            <person name="Lee L.N."/>
            <person name="Lefkowitz E.J."/>
            <person name="Lu J."/>
            <person name="Matsushima P."/>
            <person name="McAhren S.M."/>
            <person name="McHenney M."/>
            <person name="McLeaster K."/>
            <person name="Mundy C.W."/>
            <person name="Nicas T.I."/>
            <person name="Norris F.H."/>
            <person name="O'Gara M."/>
            <person name="Peery R.B."/>
            <person name="Robertson G.T."/>
            <person name="Rockey P."/>
            <person name="Sun P.-M."/>
            <person name="Winkler M.E."/>
            <person name="Yang Y."/>
            <person name="Young-Bellido M."/>
            <person name="Zhao G."/>
            <person name="Zook C.A."/>
            <person name="Baltz R.H."/>
            <person name="Jaskunas S.R."/>
            <person name="Rosteck P.R. Jr."/>
            <person name="Skatrud P.L."/>
            <person name="Glass J.I."/>
        </authorList>
    </citation>
    <scope>NUCLEOTIDE SEQUENCE [LARGE SCALE GENOMIC DNA]</scope>
    <source>
        <strain>ATCC BAA-255 / R6</strain>
    </source>
</reference>
<protein>
    <recommendedName>
        <fullName evidence="1">Undecaprenyl-diphosphatase</fullName>
        <ecNumber evidence="1">3.6.1.27</ecNumber>
    </recommendedName>
    <alternativeName>
        <fullName evidence="1">Bacitracin resistance protein</fullName>
    </alternativeName>
    <alternativeName>
        <fullName evidence="1">Undecaprenyl pyrophosphate phosphatase</fullName>
    </alternativeName>
</protein>
<accession>P60935</accession>
<accession>Q97SC8</accession>
<dbReference type="EC" id="3.6.1.27" evidence="1"/>
<dbReference type="EMBL" id="AE007317">
    <property type="protein sequence ID" value="AAK99217.1"/>
    <property type="molecule type" value="Genomic_DNA"/>
</dbReference>
<dbReference type="PIR" id="E97923">
    <property type="entry name" value="E97923"/>
</dbReference>
<dbReference type="RefSeq" id="NP_358007.1">
    <property type="nucleotide sequence ID" value="NC_003098.1"/>
</dbReference>
<dbReference type="RefSeq" id="WP_000280773.1">
    <property type="nucleotide sequence ID" value="NC_003098.1"/>
</dbReference>
<dbReference type="SMR" id="P60935"/>
<dbReference type="STRING" id="171101.spr0413"/>
<dbReference type="KEGG" id="spr:spr0413"/>
<dbReference type="PATRIC" id="fig|171101.6.peg.456"/>
<dbReference type="eggNOG" id="COG1968">
    <property type="taxonomic scope" value="Bacteria"/>
</dbReference>
<dbReference type="HOGENOM" id="CLU_060296_2_0_9"/>
<dbReference type="Proteomes" id="UP000000586">
    <property type="component" value="Chromosome"/>
</dbReference>
<dbReference type="GO" id="GO:0005886">
    <property type="term" value="C:plasma membrane"/>
    <property type="evidence" value="ECO:0000318"/>
    <property type="project" value="GO_Central"/>
</dbReference>
<dbReference type="GO" id="GO:0050380">
    <property type="term" value="F:undecaprenyl-diphosphatase activity"/>
    <property type="evidence" value="ECO:0000318"/>
    <property type="project" value="GO_Central"/>
</dbReference>
<dbReference type="GO" id="GO:0071555">
    <property type="term" value="P:cell wall organization"/>
    <property type="evidence" value="ECO:0007669"/>
    <property type="project" value="UniProtKB-KW"/>
</dbReference>
<dbReference type="GO" id="GO:0009252">
    <property type="term" value="P:peptidoglycan biosynthetic process"/>
    <property type="evidence" value="ECO:0007669"/>
    <property type="project" value="UniProtKB-KW"/>
</dbReference>
<dbReference type="GO" id="GO:0000270">
    <property type="term" value="P:peptidoglycan metabolic process"/>
    <property type="evidence" value="ECO:0000318"/>
    <property type="project" value="GO_Central"/>
</dbReference>
<dbReference type="GO" id="GO:0008360">
    <property type="term" value="P:regulation of cell shape"/>
    <property type="evidence" value="ECO:0007669"/>
    <property type="project" value="UniProtKB-KW"/>
</dbReference>
<dbReference type="GO" id="GO:0046677">
    <property type="term" value="P:response to antibiotic"/>
    <property type="evidence" value="ECO:0007669"/>
    <property type="project" value="UniProtKB-UniRule"/>
</dbReference>
<dbReference type="HAMAP" id="MF_01006">
    <property type="entry name" value="Undec_diphosphatase"/>
    <property type="match status" value="1"/>
</dbReference>
<dbReference type="InterPro" id="IPR003824">
    <property type="entry name" value="UppP"/>
</dbReference>
<dbReference type="NCBIfam" id="NF001391">
    <property type="entry name" value="PRK00281.1-5"/>
    <property type="match status" value="1"/>
</dbReference>
<dbReference type="PANTHER" id="PTHR30622">
    <property type="entry name" value="UNDECAPRENYL-DIPHOSPHATASE"/>
    <property type="match status" value="1"/>
</dbReference>
<dbReference type="PANTHER" id="PTHR30622:SF3">
    <property type="entry name" value="UNDECAPRENYL-DIPHOSPHATASE"/>
    <property type="match status" value="1"/>
</dbReference>
<dbReference type="Pfam" id="PF02673">
    <property type="entry name" value="BacA"/>
    <property type="match status" value="1"/>
</dbReference>
<comment type="function">
    <text evidence="1">Catalyzes the dephosphorylation of undecaprenyl diphosphate (UPP). Confers resistance to bacitracin.</text>
</comment>
<comment type="catalytic activity">
    <reaction evidence="1">
        <text>di-trans,octa-cis-undecaprenyl diphosphate + H2O = di-trans,octa-cis-undecaprenyl phosphate + phosphate + H(+)</text>
        <dbReference type="Rhea" id="RHEA:28094"/>
        <dbReference type="ChEBI" id="CHEBI:15377"/>
        <dbReference type="ChEBI" id="CHEBI:15378"/>
        <dbReference type="ChEBI" id="CHEBI:43474"/>
        <dbReference type="ChEBI" id="CHEBI:58405"/>
        <dbReference type="ChEBI" id="CHEBI:60392"/>
        <dbReference type="EC" id="3.6.1.27"/>
    </reaction>
</comment>
<comment type="subcellular location">
    <subcellularLocation>
        <location evidence="1">Cell membrane</location>
        <topology evidence="1">Multi-pass membrane protein</topology>
    </subcellularLocation>
</comment>
<comment type="miscellaneous">
    <text>Bacitracin is thought to be involved in the inhibition of peptidoglycan synthesis by sequestering undecaprenyl diphosphate, thereby reducing the pool of lipid carrier available.</text>
</comment>
<comment type="similarity">
    <text evidence="1">Belongs to the UppP family.</text>
</comment>
<gene>
    <name evidence="1" type="primary">uppP</name>
    <name type="synonym">bacA</name>
    <name type="synonym">upk</name>
    <name type="ordered locus">spr0413</name>
</gene>
<sequence>MYLIEILKSIFFGIVEGITEWLPISSTGHLILAEEFIQYQNQNEAFMSMFNVVIQLGAILAVMVIYFNKLNPFKPTKDKQEVRKTWRLWLKVLIATLPLLGVFKFDDWFDTHFHNMVSVALMLIIYGVAFIYLEKRNKARAIEPSVTELDKLPYTTAFYIGLFQVLALLPGTSRSGATIVGGLLNGTSRSVVTEFTFYLGIPVMFGASALKIFKFVKAGELLSFGQLFLLLVAMGVAFAVSMVAIRFLTSYVKKHDFTLFGKYRIVLGSVLLLYSFVRLFV</sequence>
<keyword id="KW-0046">Antibiotic resistance</keyword>
<keyword id="KW-1003">Cell membrane</keyword>
<keyword id="KW-0133">Cell shape</keyword>
<keyword id="KW-0961">Cell wall biogenesis/degradation</keyword>
<keyword id="KW-0378">Hydrolase</keyword>
<keyword id="KW-0472">Membrane</keyword>
<keyword id="KW-0573">Peptidoglycan synthesis</keyword>
<keyword id="KW-1185">Reference proteome</keyword>
<keyword id="KW-0812">Transmembrane</keyword>
<keyword id="KW-1133">Transmembrane helix</keyword>
<proteinExistence type="inferred from homology"/>